<accession>Q5RFL1</accession>
<reference key="1">
    <citation type="submission" date="2004-11" db="EMBL/GenBank/DDBJ databases">
        <authorList>
            <consortium name="The German cDNA consortium"/>
        </authorList>
    </citation>
    <scope>NUCLEOTIDE SEQUENCE [LARGE SCALE MRNA]</scope>
    <source>
        <tissue>Kidney</tissue>
    </source>
</reference>
<proteinExistence type="evidence at transcript level"/>
<comment type="function">
    <text evidence="2">Lysosomal serine protease with tripeptidyl-peptidase I activity. May act as a non-specific lysosomal peptidase which generates tripeptides from the breakdown products produced by lysosomal proteinases. Requires substrates with an unsubstituted N-terminus (By similarity).</text>
</comment>
<comment type="catalytic activity">
    <reaction>
        <text>Release of an N-terminal tripeptide from a polypeptide, but also has endopeptidase activity.</text>
        <dbReference type="EC" id="3.4.14.9"/>
    </reaction>
</comment>
<comment type="cofactor">
    <cofactor evidence="1">
        <name>Ca(2+)</name>
        <dbReference type="ChEBI" id="CHEBI:29108"/>
    </cofactor>
    <text evidence="1">Binds 1 Ca(2+) ion per subunit.</text>
</comment>
<comment type="subunit">
    <text evidence="1">Monomer. Interacts with CLN5. Interacts with CLN3 (By similarity).</text>
</comment>
<comment type="subcellular location">
    <subcellularLocation>
        <location evidence="1">Lysosome</location>
    </subcellularLocation>
    <subcellularLocation>
        <location evidence="1">Melanosome</location>
    </subcellularLocation>
</comment>
<comment type="PTM">
    <text evidence="1">Activated by autocatalytic proteolytical processing upon acidification. N-glycosylation is required for processing and activity (By similarity).</text>
</comment>
<feature type="signal peptide" evidence="1">
    <location>
        <begin position="1"/>
        <end position="19"/>
    </location>
</feature>
<feature type="propeptide" id="PRO_0000027382" description="Removed in mature form" evidence="1">
    <location>
        <begin position="20"/>
        <end position="195"/>
    </location>
</feature>
<feature type="chain" id="PRO_0000027383" description="Tripeptidyl-peptidase 1">
    <location>
        <begin position="196"/>
        <end position="564"/>
    </location>
</feature>
<feature type="domain" description="Peptidase S53">
    <location>
        <begin position="199"/>
        <end position="564"/>
    </location>
</feature>
<feature type="active site" description="Charge relay system" evidence="1">
    <location>
        <position position="272"/>
    </location>
</feature>
<feature type="active site" description="Charge relay system" evidence="1">
    <location>
        <position position="276"/>
    </location>
</feature>
<feature type="active site" description="Charge relay system" evidence="1">
    <location>
        <position position="475"/>
    </location>
</feature>
<feature type="binding site" evidence="1">
    <location>
        <position position="518"/>
    </location>
    <ligand>
        <name>Ca(2+)</name>
        <dbReference type="ChEBI" id="CHEBI:29108"/>
    </ligand>
</feature>
<feature type="binding site" evidence="1">
    <location>
        <position position="519"/>
    </location>
    <ligand>
        <name>Ca(2+)</name>
        <dbReference type="ChEBI" id="CHEBI:29108"/>
    </ligand>
</feature>
<feature type="binding site" evidence="1">
    <location>
        <position position="540"/>
    </location>
    <ligand>
        <name>Ca(2+)</name>
        <dbReference type="ChEBI" id="CHEBI:29108"/>
    </ligand>
</feature>
<feature type="binding site" evidence="1">
    <location>
        <position position="542"/>
    </location>
    <ligand>
        <name>Ca(2+)</name>
        <dbReference type="ChEBI" id="CHEBI:29108"/>
    </ligand>
</feature>
<feature type="binding site" evidence="1">
    <location>
        <position position="544"/>
    </location>
    <ligand>
        <name>Ca(2+)</name>
        <dbReference type="ChEBI" id="CHEBI:29108"/>
    </ligand>
</feature>
<feature type="glycosylation site" description="N-linked (GlcNAc...) asparagine" evidence="3">
    <location>
        <position position="210"/>
    </location>
</feature>
<feature type="glycosylation site" description="N-linked (GlcNAc...) asparagine" evidence="3">
    <location>
        <position position="222"/>
    </location>
</feature>
<feature type="glycosylation site" description="N-linked (GlcNAc...) asparagine" evidence="3">
    <location>
        <position position="286"/>
    </location>
</feature>
<feature type="glycosylation site" description="N-linked (GlcNAc...) asparagine" evidence="3">
    <location>
        <position position="313"/>
    </location>
</feature>
<feature type="glycosylation site" description="N-linked (GlcNAc...) asparagine" evidence="3">
    <location>
        <position position="443"/>
    </location>
</feature>
<feature type="disulfide bond" evidence="1">
    <location>
        <begin position="111"/>
        <end position="122"/>
    </location>
</feature>
<feature type="disulfide bond" evidence="1">
    <location>
        <begin position="365"/>
        <end position="527"/>
    </location>
</feature>
<feature type="disulfide bond" evidence="1">
    <location>
        <begin position="523"/>
        <end position="538"/>
    </location>
</feature>
<organism>
    <name type="scientific">Pongo abelii</name>
    <name type="common">Sumatran orangutan</name>
    <name type="synonym">Pongo pygmaeus abelii</name>
    <dbReference type="NCBI Taxonomy" id="9601"/>
    <lineage>
        <taxon>Eukaryota</taxon>
        <taxon>Metazoa</taxon>
        <taxon>Chordata</taxon>
        <taxon>Craniata</taxon>
        <taxon>Vertebrata</taxon>
        <taxon>Euteleostomi</taxon>
        <taxon>Mammalia</taxon>
        <taxon>Eutheria</taxon>
        <taxon>Euarchontoglires</taxon>
        <taxon>Primates</taxon>
        <taxon>Haplorrhini</taxon>
        <taxon>Catarrhini</taxon>
        <taxon>Hominidae</taxon>
        <taxon>Pongo</taxon>
    </lineage>
</organism>
<sequence>MGLQACLLGLFALILSGKCSYSPEPDQRRTLPPGWVSLGRADPEEELSLTFALRQQNVERLSELVQAVSDPSSPQYGKYLTLENVADLVRPSPLTLHTVQKWLLAAGAQKCHSVITQDFLTCWLSIRQAELLLPGAEFHHYVGGPTETHVVRSPHPYQLPQALAPHVDFVGGLHRFPPTSSLRQHPEPQVTGTVGLHLGVTPSVIRKRYNLTSQDVGSGTSNNSQACAQFLEQYFHDSDLAQFMRLFGGNFAHQASVARVVGQQGRGRAGIEASLDVQYLMSAGANISTWVYSSPGRHEGQEPFLQWLMLLSNESALPHVHTVSYGDEEDSLSSAYIQRVNTELMKAAARGLTLLFASGDSGAGCWSVSGRHQFRPTFPASSPYVTTVGGTSFLEPFLTTNEIVDYISGGGFSNVFPRPSYQEEAVTKFLSSSPHLPPSSYFNASGRAYPDVAALSDGYWVVSNRVPIPWVSGTSASTPVFGGGILSLINEHRILSGRPPLGFLNPRLYQQHGAGLFDVTHGCHESCLDEEVEGQGFCSGPGWDPVTGWGTPNFPALPKTLLNP</sequence>
<name>TPP1_PONAB</name>
<protein>
    <recommendedName>
        <fullName>Tripeptidyl-peptidase 1</fullName>
        <shortName>TPP-1</shortName>
        <ecNumber>3.4.14.9</ecNumber>
    </recommendedName>
    <alternativeName>
        <fullName>Tripeptidyl aminopeptidase</fullName>
    </alternativeName>
    <alternativeName>
        <fullName>Tripeptidyl-peptidase I</fullName>
        <shortName>TPP-I</shortName>
    </alternativeName>
</protein>
<evidence type="ECO:0000250" key="1">
    <source>
        <dbReference type="UniProtKB" id="O14773"/>
    </source>
</evidence>
<evidence type="ECO:0000250" key="2">
    <source>
        <dbReference type="UniProtKB" id="Q9EQV6"/>
    </source>
</evidence>
<evidence type="ECO:0000255" key="3"/>
<keyword id="KW-0068">Autocatalytic cleavage</keyword>
<keyword id="KW-0106">Calcium</keyword>
<keyword id="KW-1015">Disulfide bond</keyword>
<keyword id="KW-0325">Glycoprotein</keyword>
<keyword id="KW-0378">Hydrolase</keyword>
<keyword id="KW-0458">Lysosome</keyword>
<keyword id="KW-0479">Metal-binding</keyword>
<keyword id="KW-0645">Protease</keyword>
<keyword id="KW-1185">Reference proteome</keyword>
<keyword id="KW-0720">Serine protease</keyword>
<keyword id="KW-0732">Signal</keyword>
<keyword id="KW-0865">Zymogen</keyword>
<gene>
    <name type="primary">TPP1</name>
    <name type="synonym">CLN2</name>
</gene>
<dbReference type="EC" id="3.4.14.9"/>
<dbReference type="EMBL" id="CR857144">
    <property type="protein sequence ID" value="CAH89446.1"/>
    <property type="molecule type" value="mRNA"/>
</dbReference>
<dbReference type="RefSeq" id="NP_001124619.1">
    <property type="nucleotide sequence ID" value="NM_001131147.1"/>
</dbReference>
<dbReference type="SMR" id="Q5RFL1"/>
<dbReference type="STRING" id="9601.ENSPPYP00000004053"/>
<dbReference type="MEROPS" id="S53.003"/>
<dbReference type="GlyCosmos" id="Q5RFL1">
    <property type="glycosylation" value="5 sites, No reported glycans"/>
</dbReference>
<dbReference type="GeneID" id="100440001"/>
<dbReference type="KEGG" id="pon:100440001"/>
<dbReference type="CTD" id="1200"/>
<dbReference type="eggNOG" id="ENOG502QR6D">
    <property type="taxonomic scope" value="Eukaryota"/>
</dbReference>
<dbReference type="InParanoid" id="Q5RFL1"/>
<dbReference type="OrthoDB" id="2919105at2759"/>
<dbReference type="Proteomes" id="UP000001595">
    <property type="component" value="Unplaced"/>
</dbReference>
<dbReference type="GO" id="GO:0005794">
    <property type="term" value="C:Golgi apparatus"/>
    <property type="evidence" value="ECO:0000250"/>
    <property type="project" value="UniProtKB"/>
</dbReference>
<dbReference type="GO" id="GO:0005764">
    <property type="term" value="C:lysosome"/>
    <property type="evidence" value="ECO:0000250"/>
    <property type="project" value="UniProtKB"/>
</dbReference>
<dbReference type="GO" id="GO:0042470">
    <property type="term" value="C:melanosome"/>
    <property type="evidence" value="ECO:0007669"/>
    <property type="project" value="UniProtKB-SubCell"/>
</dbReference>
<dbReference type="GO" id="GO:0045121">
    <property type="term" value="C:membrane raft"/>
    <property type="evidence" value="ECO:0000250"/>
    <property type="project" value="UniProtKB"/>
</dbReference>
<dbReference type="GO" id="GO:0055037">
    <property type="term" value="C:recycling endosome"/>
    <property type="evidence" value="ECO:0000250"/>
    <property type="project" value="UniProtKB"/>
</dbReference>
<dbReference type="GO" id="GO:0035727">
    <property type="term" value="F:lysophosphatidic acid binding"/>
    <property type="evidence" value="ECO:0000250"/>
    <property type="project" value="UniProtKB"/>
</dbReference>
<dbReference type="GO" id="GO:0046872">
    <property type="term" value="F:metal ion binding"/>
    <property type="evidence" value="ECO:0007669"/>
    <property type="project" value="UniProtKB-KW"/>
</dbReference>
<dbReference type="GO" id="GO:0008233">
    <property type="term" value="F:peptidase activity"/>
    <property type="evidence" value="ECO:0000250"/>
    <property type="project" value="UniProtKB"/>
</dbReference>
<dbReference type="GO" id="GO:0004252">
    <property type="term" value="F:serine-type endopeptidase activity"/>
    <property type="evidence" value="ECO:0007669"/>
    <property type="project" value="InterPro"/>
</dbReference>
<dbReference type="GO" id="GO:0008236">
    <property type="term" value="F:serine-type peptidase activity"/>
    <property type="evidence" value="ECO:0000250"/>
    <property type="project" value="UniProtKB"/>
</dbReference>
<dbReference type="GO" id="GO:0120146">
    <property type="term" value="F:sulfatide binding"/>
    <property type="evidence" value="ECO:0000250"/>
    <property type="project" value="UniProtKB"/>
</dbReference>
<dbReference type="GO" id="GO:0008240">
    <property type="term" value="F:tripeptidyl-peptidase activity"/>
    <property type="evidence" value="ECO:0007669"/>
    <property type="project" value="TreeGrafter"/>
</dbReference>
<dbReference type="GO" id="GO:0045453">
    <property type="term" value="P:bone resorption"/>
    <property type="evidence" value="ECO:0000250"/>
    <property type="project" value="UniProtKB"/>
</dbReference>
<dbReference type="GO" id="GO:0007417">
    <property type="term" value="P:central nervous system development"/>
    <property type="evidence" value="ECO:0007669"/>
    <property type="project" value="TreeGrafter"/>
</dbReference>
<dbReference type="GO" id="GO:0007399">
    <property type="term" value="P:nervous system development"/>
    <property type="evidence" value="ECO:0000250"/>
    <property type="project" value="UniProtKB"/>
</dbReference>
<dbReference type="GO" id="GO:0043171">
    <property type="term" value="P:peptide catabolic process"/>
    <property type="evidence" value="ECO:0000250"/>
    <property type="project" value="UniProtKB"/>
</dbReference>
<dbReference type="GO" id="GO:0006508">
    <property type="term" value="P:proteolysis"/>
    <property type="evidence" value="ECO:0000250"/>
    <property type="project" value="UniProtKB"/>
</dbReference>
<dbReference type="CDD" id="cd04056">
    <property type="entry name" value="Peptidases_S53"/>
    <property type="match status" value="1"/>
</dbReference>
<dbReference type="CDD" id="cd11377">
    <property type="entry name" value="Pro-peptidase_S53"/>
    <property type="match status" value="1"/>
</dbReference>
<dbReference type="FunFam" id="3.40.50.200:FF:000012">
    <property type="entry name" value="Tripeptidyl-peptidase 1 preproprotein"/>
    <property type="match status" value="1"/>
</dbReference>
<dbReference type="Gene3D" id="3.40.50.200">
    <property type="entry name" value="Peptidase S8/S53 domain"/>
    <property type="match status" value="1"/>
</dbReference>
<dbReference type="InterPro" id="IPR000209">
    <property type="entry name" value="Peptidase_S8/S53_dom"/>
</dbReference>
<dbReference type="InterPro" id="IPR036852">
    <property type="entry name" value="Peptidase_S8/S53_dom_sf"/>
</dbReference>
<dbReference type="InterPro" id="IPR015366">
    <property type="entry name" value="S53_propep"/>
</dbReference>
<dbReference type="InterPro" id="IPR030400">
    <property type="entry name" value="Sedolisin_dom"/>
</dbReference>
<dbReference type="InterPro" id="IPR050819">
    <property type="entry name" value="Tripeptidyl-peptidase_I"/>
</dbReference>
<dbReference type="PANTHER" id="PTHR14218">
    <property type="entry name" value="PROTEASE S8 TRIPEPTIDYL PEPTIDASE I CLN2"/>
    <property type="match status" value="1"/>
</dbReference>
<dbReference type="PANTHER" id="PTHR14218:SF15">
    <property type="entry name" value="TRIPEPTIDYL-PEPTIDASE 1"/>
    <property type="match status" value="1"/>
</dbReference>
<dbReference type="Pfam" id="PF00082">
    <property type="entry name" value="Peptidase_S8"/>
    <property type="match status" value="1"/>
</dbReference>
<dbReference type="Pfam" id="PF09286">
    <property type="entry name" value="Pro-kuma_activ"/>
    <property type="match status" value="1"/>
</dbReference>
<dbReference type="SMART" id="SM00944">
    <property type="entry name" value="Pro-kuma_activ"/>
    <property type="match status" value="1"/>
</dbReference>
<dbReference type="SUPFAM" id="SSF54897">
    <property type="entry name" value="Protease propeptides/inhibitors"/>
    <property type="match status" value="1"/>
</dbReference>
<dbReference type="SUPFAM" id="SSF52743">
    <property type="entry name" value="Subtilisin-like"/>
    <property type="match status" value="1"/>
</dbReference>
<dbReference type="PROSITE" id="PS51695">
    <property type="entry name" value="SEDOLISIN"/>
    <property type="match status" value="1"/>
</dbReference>